<accession>A4G1N1</accession>
<comment type="function">
    <text evidence="1">Required for disulfide bond formation in some periplasmic proteins. Acts by oxidizing the DsbA protein.</text>
</comment>
<comment type="subcellular location">
    <subcellularLocation>
        <location evidence="1">Cell inner membrane</location>
        <topology evidence="1">Multi-pass membrane protein</topology>
    </subcellularLocation>
</comment>
<comment type="similarity">
    <text evidence="1">Belongs to the DsbB family.</text>
</comment>
<dbReference type="EMBL" id="CU207211">
    <property type="protein sequence ID" value="CAL60418.1"/>
    <property type="molecule type" value="Genomic_DNA"/>
</dbReference>
<dbReference type="SMR" id="A4G1N1"/>
<dbReference type="STRING" id="204773.HEAR0184"/>
<dbReference type="KEGG" id="har:HEAR0184"/>
<dbReference type="eggNOG" id="COG1495">
    <property type="taxonomic scope" value="Bacteria"/>
</dbReference>
<dbReference type="HOGENOM" id="CLU_098660_1_0_4"/>
<dbReference type="OrthoDB" id="3711263at2"/>
<dbReference type="Proteomes" id="UP000006697">
    <property type="component" value="Chromosome"/>
</dbReference>
<dbReference type="GO" id="GO:0005886">
    <property type="term" value="C:plasma membrane"/>
    <property type="evidence" value="ECO:0007669"/>
    <property type="project" value="UniProtKB-SubCell"/>
</dbReference>
<dbReference type="GO" id="GO:0009055">
    <property type="term" value="F:electron transfer activity"/>
    <property type="evidence" value="ECO:0007669"/>
    <property type="project" value="UniProtKB-UniRule"/>
</dbReference>
<dbReference type="GO" id="GO:0015035">
    <property type="term" value="F:protein-disulfide reductase activity"/>
    <property type="evidence" value="ECO:0007669"/>
    <property type="project" value="UniProtKB-UniRule"/>
</dbReference>
<dbReference type="GO" id="GO:0006457">
    <property type="term" value="P:protein folding"/>
    <property type="evidence" value="ECO:0007669"/>
    <property type="project" value="InterPro"/>
</dbReference>
<dbReference type="Gene3D" id="1.20.1550.10">
    <property type="entry name" value="DsbB-like"/>
    <property type="match status" value="1"/>
</dbReference>
<dbReference type="HAMAP" id="MF_00286">
    <property type="entry name" value="DsbB"/>
    <property type="match status" value="1"/>
</dbReference>
<dbReference type="InterPro" id="IPR003752">
    <property type="entry name" value="DiS_bond_form_DsbB/BdbC"/>
</dbReference>
<dbReference type="InterPro" id="IPR022920">
    <property type="entry name" value="Disulphide_bond_form_DsbB"/>
</dbReference>
<dbReference type="InterPro" id="IPR050183">
    <property type="entry name" value="DsbB"/>
</dbReference>
<dbReference type="InterPro" id="IPR023380">
    <property type="entry name" value="DsbB-like_sf"/>
</dbReference>
<dbReference type="NCBIfam" id="NF002552">
    <property type="entry name" value="PRK02110.1"/>
    <property type="match status" value="1"/>
</dbReference>
<dbReference type="PANTHER" id="PTHR36570">
    <property type="entry name" value="DISULFIDE BOND FORMATION PROTEIN B"/>
    <property type="match status" value="1"/>
</dbReference>
<dbReference type="PANTHER" id="PTHR36570:SF3">
    <property type="entry name" value="DISULFIDE BOND FORMATION PROTEIN B"/>
    <property type="match status" value="1"/>
</dbReference>
<dbReference type="Pfam" id="PF02600">
    <property type="entry name" value="DsbB"/>
    <property type="match status" value="1"/>
</dbReference>
<dbReference type="SUPFAM" id="SSF158442">
    <property type="entry name" value="DsbB-like"/>
    <property type="match status" value="1"/>
</dbReference>
<sequence>MKNSRPVLFAVALASLLLLAVALYLQHVENMLPCPLCVIQRYAFAAIALICLVTAFRTEVTARIGAALAALASLAGAGVAGWHIYIKAHPTVSCGIDPLETSLNTIPTAKLLPFLLQADGLCTTEYAPIMGLSIPQWALVWFIVIALFLLHTAFRKKS</sequence>
<organism>
    <name type="scientific">Herminiimonas arsenicoxydans</name>
    <dbReference type="NCBI Taxonomy" id="204773"/>
    <lineage>
        <taxon>Bacteria</taxon>
        <taxon>Pseudomonadati</taxon>
        <taxon>Pseudomonadota</taxon>
        <taxon>Betaproteobacteria</taxon>
        <taxon>Burkholderiales</taxon>
        <taxon>Oxalobacteraceae</taxon>
        <taxon>Herminiimonas</taxon>
    </lineage>
</organism>
<reference key="1">
    <citation type="journal article" date="2007" name="PLoS Genet.">
        <title>A tale of two oxidation states: bacterial colonization of arsenic-rich environments.</title>
        <authorList>
            <person name="Muller D."/>
            <person name="Medigue C."/>
            <person name="Koechler S."/>
            <person name="Barbe V."/>
            <person name="Barakat M."/>
            <person name="Talla E."/>
            <person name="Bonnefoy V."/>
            <person name="Krin E."/>
            <person name="Arsene-Ploetze F."/>
            <person name="Carapito C."/>
            <person name="Chandler M."/>
            <person name="Cournoyer B."/>
            <person name="Cruveiller S."/>
            <person name="Dossat C."/>
            <person name="Duval S."/>
            <person name="Heymann M."/>
            <person name="Leize E."/>
            <person name="Lieutaud A."/>
            <person name="Lievremont D."/>
            <person name="Makita Y."/>
            <person name="Mangenot S."/>
            <person name="Nitschke W."/>
            <person name="Ortet P."/>
            <person name="Perdrial N."/>
            <person name="Schoepp B."/>
            <person name="Siguier P."/>
            <person name="Simeonova D.D."/>
            <person name="Rouy Z."/>
            <person name="Segurens B."/>
            <person name="Turlin E."/>
            <person name="Vallenet D."/>
            <person name="van Dorsselaer A."/>
            <person name="Weiss S."/>
            <person name="Weissenbach J."/>
            <person name="Lett M.-C."/>
            <person name="Danchin A."/>
            <person name="Bertin P.N."/>
        </authorList>
    </citation>
    <scope>NUCLEOTIDE SEQUENCE [LARGE SCALE GENOMIC DNA]</scope>
    <source>
        <strain>ULPAs1</strain>
    </source>
</reference>
<proteinExistence type="inferred from homology"/>
<name>DSBB_HERAR</name>
<gene>
    <name evidence="1" type="primary">dsbB</name>
    <name type="ordered locus">HEAR0184</name>
</gene>
<protein>
    <recommendedName>
        <fullName evidence="1">Disulfide bond formation protein B</fullName>
    </recommendedName>
    <alternativeName>
        <fullName evidence="1">Disulfide oxidoreductase</fullName>
    </alternativeName>
</protein>
<feature type="chain" id="PRO_0000298363" description="Disulfide bond formation protein B">
    <location>
        <begin position="1"/>
        <end position="158"/>
    </location>
</feature>
<feature type="topological domain" description="Cytoplasmic" evidence="1">
    <location>
        <begin position="1"/>
        <end position="7"/>
    </location>
</feature>
<feature type="transmembrane region" description="Helical" evidence="1">
    <location>
        <begin position="8"/>
        <end position="24"/>
    </location>
</feature>
<feature type="topological domain" description="Periplasmic" evidence="1">
    <location>
        <begin position="25"/>
        <end position="42"/>
    </location>
</feature>
<feature type="transmembrane region" description="Helical" evidence="1">
    <location>
        <begin position="43"/>
        <end position="57"/>
    </location>
</feature>
<feature type="topological domain" description="Cytoplasmic" evidence="1">
    <location>
        <begin position="58"/>
        <end position="63"/>
    </location>
</feature>
<feature type="transmembrane region" description="Helical" evidence="1">
    <location>
        <begin position="64"/>
        <end position="81"/>
    </location>
</feature>
<feature type="topological domain" description="Periplasmic" evidence="1">
    <location>
        <begin position="82"/>
        <end position="136"/>
    </location>
</feature>
<feature type="transmembrane region" description="Helical" evidence="1">
    <location>
        <begin position="137"/>
        <end position="155"/>
    </location>
</feature>
<feature type="topological domain" description="Cytoplasmic" evidence="1">
    <location>
        <begin position="156"/>
        <end position="158"/>
    </location>
</feature>
<feature type="disulfide bond" description="Redox-active" evidence="1">
    <location>
        <begin position="34"/>
        <end position="37"/>
    </location>
</feature>
<feature type="disulfide bond" description="Redox-active" evidence="1">
    <location>
        <begin position="94"/>
        <end position="122"/>
    </location>
</feature>
<evidence type="ECO:0000255" key="1">
    <source>
        <dbReference type="HAMAP-Rule" id="MF_00286"/>
    </source>
</evidence>
<keyword id="KW-0997">Cell inner membrane</keyword>
<keyword id="KW-1003">Cell membrane</keyword>
<keyword id="KW-0143">Chaperone</keyword>
<keyword id="KW-1015">Disulfide bond</keyword>
<keyword id="KW-0249">Electron transport</keyword>
<keyword id="KW-0472">Membrane</keyword>
<keyword id="KW-0560">Oxidoreductase</keyword>
<keyword id="KW-0676">Redox-active center</keyword>
<keyword id="KW-1185">Reference proteome</keyword>
<keyword id="KW-0812">Transmembrane</keyword>
<keyword id="KW-1133">Transmembrane helix</keyword>
<keyword id="KW-0813">Transport</keyword>